<proteinExistence type="inferred from homology"/>
<feature type="chain" id="PRO_1000000464" description="Argininosuccinate lyase">
    <location>
        <begin position="1"/>
        <end position="460"/>
    </location>
</feature>
<gene>
    <name evidence="1" type="primary">argH</name>
    <name type="ordered locus">JJD26997_0883</name>
</gene>
<sequence length="460" mass="51787">MKNEMWSGRFSGASDELLKEFNASLNVDKTLFNEDIQGSIAHATMLESCGILKKEELDAIVKGLEQVRSEIEQGKFIFDIKDEDIHMAIEKRLSEIIGSEIGGRLHTARSRNDQVATDFKLFVKKSHIELIKLLKELIQTMLEHAKVHKKTIMPSFTHLQHAQPVSFSFYILAYAFMLMRDVKRLQNSLELAGFSPLGSCACAGTSYATNRELSAKILGFKDIMPNAMDGVSDRDFVLDLLYDIAVIFTHTSRLCEEMILFSSSEFSFITISDSFSTGSSIMPQKKNPDVCELIRGKTGRVYGNLISLLTIMKALPLAYNKDMQEDKEGLFDSVKTAKDSLIILNVMLKEIRINKENMLNACKKGHLLATDLADYLVREKNIPFRKAHFIVGNVVAQAEVQGIDISEIKDLSKIDPIFDEKAMELLNFEFSLNSKQSEGSSSIASVEKQIQILQEFIKKL</sequence>
<keyword id="KW-0028">Amino-acid biosynthesis</keyword>
<keyword id="KW-0055">Arginine biosynthesis</keyword>
<keyword id="KW-0963">Cytoplasm</keyword>
<keyword id="KW-0456">Lyase</keyword>
<name>ARLY_CAMJD</name>
<accession>A7H3C0</accession>
<protein>
    <recommendedName>
        <fullName evidence="1">Argininosuccinate lyase</fullName>
        <shortName evidence="1">ASAL</shortName>
        <ecNumber evidence="1">4.3.2.1</ecNumber>
    </recommendedName>
    <alternativeName>
        <fullName evidence="1">Arginosuccinase</fullName>
    </alternativeName>
</protein>
<reference key="1">
    <citation type="submission" date="2007-07" db="EMBL/GenBank/DDBJ databases">
        <title>Complete genome sequence of Campylobacter jejuni subsp doylei 269.97 isolated from human blood.</title>
        <authorList>
            <person name="Fouts D.E."/>
            <person name="Mongodin E.F."/>
            <person name="Puiu D."/>
            <person name="Sebastian Y."/>
            <person name="Miller W.G."/>
            <person name="Mandrell R.E."/>
            <person name="Lastovica A.J."/>
            <person name="Nelson K.E."/>
        </authorList>
    </citation>
    <scope>NUCLEOTIDE SEQUENCE [LARGE SCALE GENOMIC DNA]</scope>
    <source>
        <strain>ATCC BAA-1458 / RM4099 / 269.97</strain>
    </source>
</reference>
<comment type="catalytic activity">
    <reaction evidence="1">
        <text>2-(N(omega)-L-arginino)succinate = fumarate + L-arginine</text>
        <dbReference type="Rhea" id="RHEA:24020"/>
        <dbReference type="ChEBI" id="CHEBI:29806"/>
        <dbReference type="ChEBI" id="CHEBI:32682"/>
        <dbReference type="ChEBI" id="CHEBI:57472"/>
        <dbReference type="EC" id="4.3.2.1"/>
    </reaction>
</comment>
<comment type="pathway">
    <text evidence="1">Amino-acid biosynthesis; L-arginine biosynthesis; L-arginine from L-ornithine and carbamoyl phosphate: step 3/3.</text>
</comment>
<comment type="subcellular location">
    <subcellularLocation>
        <location evidence="1">Cytoplasm</location>
    </subcellularLocation>
</comment>
<comment type="similarity">
    <text evidence="1">Belongs to the lyase 1 family. Argininosuccinate lyase subfamily.</text>
</comment>
<dbReference type="EC" id="4.3.2.1" evidence="1"/>
<dbReference type="EMBL" id="CP000768">
    <property type="protein sequence ID" value="ABS43921.1"/>
    <property type="molecule type" value="Genomic_DNA"/>
</dbReference>
<dbReference type="SMR" id="A7H3C0"/>
<dbReference type="KEGG" id="cjd:JJD26997_0883"/>
<dbReference type="HOGENOM" id="CLU_027272_2_3_7"/>
<dbReference type="UniPathway" id="UPA00068">
    <property type="reaction ID" value="UER00114"/>
</dbReference>
<dbReference type="Proteomes" id="UP000002302">
    <property type="component" value="Chromosome"/>
</dbReference>
<dbReference type="GO" id="GO:0005829">
    <property type="term" value="C:cytosol"/>
    <property type="evidence" value="ECO:0007669"/>
    <property type="project" value="TreeGrafter"/>
</dbReference>
<dbReference type="GO" id="GO:0004056">
    <property type="term" value="F:argininosuccinate lyase activity"/>
    <property type="evidence" value="ECO:0007669"/>
    <property type="project" value="UniProtKB-UniRule"/>
</dbReference>
<dbReference type="GO" id="GO:0042450">
    <property type="term" value="P:arginine biosynthetic process via ornithine"/>
    <property type="evidence" value="ECO:0007669"/>
    <property type="project" value="InterPro"/>
</dbReference>
<dbReference type="GO" id="GO:0006526">
    <property type="term" value="P:L-arginine biosynthetic process"/>
    <property type="evidence" value="ECO:0007669"/>
    <property type="project" value="UniProtKB-UniRule"/>
</dbReference>
<dbReference type="CDD" id="cd01359">
    <property type="entry name" value="Argininosuccinate_lyase"/>
    <property type="match status" value="1"/>
</dbReference>
<dbReference type="FunFam" id="1.10.275.10:FF:000002">
    <property type="entry name" value="Argininosuccinate lyase"/>
    <property type="match status" value="1"/>
</dbReference>
<dbReference type="FunFam" id="1.10.40.30:FF:000001">
    <property type="entry name" value="Argininosuccinate lyase"/>
    <property type="match status" value="1"/>
</dbReference>
<dbReference type="FunFam" id="1.20.200.10:FF:000015">
    <property type="entry name" value="argininosuccinate lyase isoform X2"/>
    <property type="match status" value="1"/>
</dbReference>
<dbReference type="Gene3D" id="1.10.40.30">
    <property type="entry name" value="Fumarase/aspartase (C-terminal domain)"/>
    <property type="match status" value="1"/>
</dbReference>
<dbReference type="Gene3D" id="1.20.200.10">
    <property type="entry name" value="Fumarase/aspartase (Central domain)"/>
    <property type="match status" value="1"/>
</dbReference>
<dbReference type="Gene3D" id="1.10.275.10">
    <property type="entry name" value="Fumarase/aspartase (N-terminal domain)"/>
    <property type="match status" value="1"/>
</dbReference>
<dbReference type="HAMAP" id="MF_00006">
    <property type="entry name" value="Arg_succ_lyase"/>
    <property type="match status" value="1"/>
</dbReference>
<dbReference type="InterPro" id="IPR029419">
    <property type="entry name" value="Arg_succ_lyase_C"/>
</dbReference>
<dbReference type="InterPro" id="IPR009049">
    <property type="entry name" value="Argininosuccinate_lyase"/>
</dbReference>
<dbReference type="InterPro" id="IPR024083">
    <property type="entry name" value="Fumarase/histidase_N"/>
</dbReference>
<dbReference type="InterPro" id="IPR020557">
    <property type="entry name" value="Fumarate_lyase_CS"/>
</dbReference>
<dbReference type="InterPro" id="IPR000362">
    <property type="entry name" value="Fumarate_lyase_fam"/>
</dbReference>
<dbReference type="InterPro" id="IPR022761">
    <property type="entry name" value="Fumarate_lyase_N"/>
</dbReference>
<dbReference type="InterPro" id="IPR008948">
    <property type="entry name" value="L-Aspartase-like"/>
</dbReference>
<dbReference type="NCBIfam" id="TIGR00838">
    <property type="entry name" value="argH"/>
    <property type="match status" value="1"/>
</dbReference>
<dbReference type="PANTHER" id="PTHR43814">
    <property type="entry name" value="ARGININOSUCCINATE LYASE"/>
    <property type="match status" value="1"/>
</dbReference>
<dbReference type="PANTHER" id="PTHR43814:SF1">
    <property type="entry name" value="ARGININOSUCCINATE LYASE"/>
    <property type="match status" value="1"/>
</dbReference>
<dbReference type="Pfam" id="PF14698">
    <property type="entry name" value="ASL_C2"/>
    <property type="match status" value="1"/>
</dbReference>
<dbReference type="Pfam" id="PF00206">
    <property type="entry name" value="Lyase_1"/>
    <property type="match status" value="1"/>
</dbReference>
<dbReference type="PRINTS" id="PR00145">
    <property type="entry name" value="ARGSUCLYASE"/>
</dbReference>
<dbReference type="PRINTS" id="PR00149">
    <property type="entry name" value="FUMRATELYASE"/>
</dbReference>
<dbReference type="SUPFAM" id="SSF48557">
    <property type="entry name" value="L-aspartase-like"/>
    <property type="match status" value="1"/>
</dbReference>
<dbReference type="PROSITE" id="PS00163">
    <property type="entry name" value="FUMARATE_LYASES"/>
    <property type="match status" value="1"/>
</dbReference>
<evidence type="ECO:0000255" key="1">
    <source>
        <dbReference type="HAMAP-Rule" id="MF_00006"/>
    </source>
</evidence>
<organism>
    <name type="scientific">Campylobacter jejuni subsp. doylei (strain ATCC BAA-1458 / RM4099 / 269.97)</name>
    <dbReference type="NCBI Taxonomy" id="360109"/>
    <lineage>
        <taxon>Bacteria</taxon>
        <taxon>Pseudomonadati</taxon>
        <taxon>Campylobacterota</taxon>
        <taxon>Epsilonproteobacteria</taxon>
        <taxon>Campylobacterales</taxon>
        <taxon>Campylobacteraceae</taxon>
        <taxon>Campylobacter</taxon>
    </lineage>
</organism>